<dbReference type="EMBL" id="AAYY01000006">
    <property type="protein sequence ID" value="EDP43565.1"/>
    <property type="molecule type" value="Genomic_DNA"/>
</dbReference>
<dbReference type="RefSeq" id="XP_001730779.1">
    <property type="nucleotide sequence ID" value="XM_001730727.1"/>
</dbReference>
<dbReference type="SMR" id="A8Q1F0"/>
<dbReference type="FunCoup" id="A8Q1F0">
    <property type="interactions" value="675"/>
</dbReference>
<dbReference type="STRING" id="425265.A8Q1F0"/>
<dbReference type="GeneID" id="5855086"/>
<dbReference type="KEGG" id="mgl:MGL_1778"/>
<dbReference type="VEuPathDB" id="FungiDB:MGL_1778"/>
<dbReference type="InParanoid" id="A8Q1F0"/>
<dbReference type="OMA" id="QKVTWIV"/>
<dbReference type="OrthoDB" id="10264910at2759"/>
<dbReference type="Proteomes" id="UP000008837">
    <property type="component" value="Unassembled WGS sequence"/>
</dbReference>
<dbReference type="GO" id="GO:0005654">
    <property type="term" value="C:nucleoplasm"/>
    <property type="evidence" value="ECO:0007669"/>
    <property type="project" value="UniProtKB-SubCell"/>
</dbReference>
<dbReference type="GO" id="GO:0070545">
    <property type="term" value="C:PeBoW complex"/>
    <property type="evidence" value="ECO:0007669"/>
    <property type="project" value="TreeGrafter"/>
</dbReference>
<dbReference type="GO" id="GO:0030687">
    <property type="term" value="C:preribosome, large subunit precursor"/>
    <property type="evidence" value="ECO:0007669"/>
    <property type="project" value="UniProtKB-UniRule"/>
</dbReference>
<dbReference type="GO" id="GO:0043021">
    <property type="term" value="F:ribonucleoprotein complex binding"/>
    <property type="evidence" value="ECO:0007669"/>
    <property type="project" value="UniProtKB-UniRule"/>
</dbReference>
<dbReference type="GO" id="GO:0003723">
    <property type="term" value="F:RNA binding"/>
    <property type="evidence" value="ECO:0007669"/>
    <property type="project" value="TreeGrafter"/>
</dbReference>
<dbReference type="GO" id="GO:0000466">
    <property type="term" value="P:maturation of 5.8S rRNA from tricistronic rRNA transcript (SSU-rRNA, 5.8S rRNA, LSU-rRNA)"/>
    <property type="evidence" value="ECO:0007669"/>
    <property type="project" value="UniProtKB-UniRule"/>
</dbReference>
<dbReference type="GO" id="GO:0000463">
    <property type="term" value="P:maturation of LSU-rRNA from tricistronic rRNA transcript (SSU-rRNA, 5.8S rRNA, LSU-rRNA)"/>
    <property type="evidence" value="ECO:0007669"/>
    <property type="project" value="UniProtKB-UniRule"/>
</dbReference>
<dbReference type="CDD" id="cd17709">
    <property type="entry name" value="BRCT_pescadillo_like"/>
    <property type="match status" value="1"/>
</dbReference>
<dbReference type="Gene3D" id="3.40.50.10190">
    <property type="entry name" value="BRCT domain"/>
    <property type="match status" value="1"/>
</dbReference>
<dbReference type="HAMAP" id="MF_03028">
    <property type="entry name" value="Pescadillo"/>
    <property type="match status" value="1"/>
</dbReference>
<dbReference type="InterPro" id="IPR001357">
    <property type="entry name" value="BRCT_dom"/>
</dbReference>
<dbReference type="InterPro" id="IPR036420">
    <property type="entry name" value="BRCT_dom_sf"/>
</dbReference>
<dbReference type="InterPro" id="IPR010613">
    <property type="entry name" value="PES"/>
</dbReference>
<dbReference type="PANTHER" id="PTHR12221">
    <property type="entry name" value="PESCADILLO - RELATED"/>
    <property type="match status" value="1"/>
</dbReference>
<dbReference type="PANTHER" id="PTHR12221:SF6">
    <property type="entry name" value="PESCADILLO HOMOLOG"/>
    <property type="match status" value="1"/>
</dbReference>
<dbReference type="Pfam" id="PF06732">
    <property type="entry name" value="Pescadillo_N"/>
    <property type="match status" value="1"/>
</dbReference>
<dbReference type="SUPFAM" id="SSF52113">
    <property type="entry name" value="BRCT domain"/>
    <property type="match status" value="1"/>
</dbReference>
<dbReference type="PROSITE" id="PS50172">
    <property type="entry name" value="BRCT"/>
    <property type="match status" value="1"/>
</dbReference>
<keyword id="KW-0539">Nucleus</keyword>
<keyword id="KW-1185">Reference proteome</keyword>
<keyword id="KW-0690">Ribosome biogenesis</keyword>
<keyword id="KW-0698">rRNA processing</keyword>
<proteinExistence type="inferred from homology"/>
<feature type="chain" id="PRO_0000370496" description="Pescadillo homolog">
    <location>
        <begin position="1"/>
        <end position="684"/>
    </location>
</feature>
<feature type="domain" description="BRCT" evidence="1">
    <location>
        <begin position="387"/>
        <end position="486"/>
    </location>
</feature>
<feature type="region of interest" description="Disordered" evidence="2">
    <location>
        <begin position="284"/>
        <end position="352"/>
    </location>
</feature>
<feature type="region of interest" description="Disordered" evidence="2">
    <location>
        <begin position="508"/>
        <end position="580"/>
    </location>
</feature>
<feature type="region of interest" description="Disordered" evidence="2">
    <location>
        <begin position="612"/>
        <end position="684"/>
    </location>
</feature>
<feature type="compositionally biased region" description="Low complexity" evidence="2">
    <location>
        <begin position="285"/>
        <end position="294"/>
    </location>
</feature>
<feature type="compositionally biased region" description="Basic and acidic residues" evidence="2">
    <location>
        <begin position="296"/>
        <end position="310"/>
    </location>
</feature>
<feature type="compositionally biased region" description="Acidic residues" evidence="2">
    <location>
        <begin position="342"/>
        <end position="352"/>
    </location>
</feature>
<feature type="compositionally biased region" description="Acidic residues" evidence="2">
    <location>
        <begin position="528"/>
        <end position="543"/>
    </location>
</feature>
<feature type="compositionally biased region" description="Basic and acidic residues" evidence="2">
    <location>
        <begin position="544"/>
        <end position="570"/>
    </location>
</feature>
<feature type="compositionally biased region" description="Basic residues" evidence="2">
    <location>
        <begin position="612"/>
        <end position="624"/>
    </location>
</feature>
<feature type="compositionally biased region" description="Basic and acidic residues" evidence="2">
    <location>
        <begin position="663"/>
        <end position="675"/>
    </location>
</feature>
<evidence type="ECO:0000255" key="1">
    <source>
        <dbReference type="HAMAP-Rule" id="MF_03028"/>
    </source>
</evidence>
<evidence type="ECO:0000256" key="2">
    <source>
        <dbReference type="SAM" id="MobiDB-lite"/>
    </source>
</evidence>
<comment type="function">
    <text evidence="1">Component of the NOP7 complex, which is required for maturation of the 25S and 5.8S ribosomal RNAs and formation of the 60S ribosome.</text>
</comment>
<comment type="subunit">
    <text evidence="1">Component of the NOP7 complex, composed of ERB1, NOP7 and YTM1. The complex is held together by ERB1, which interacts with NOP7 via its N-terminal domain and with YTM1 via a high-affinity interaction between the seven-bladed beta-propeller domains of the 2 proteins. The NOP7 complex associates with the 66S pre-ribosome.</text>
</comment>
<comment type="subcellular location">
    <subcellularLocation>
        <location evidence="1">Nucleus</location>
        <location evidence="1">Nucleolus</location>
    </subcellularLocation>
    <subcellularLocation>
        <location evidence="1">Nucleus</location>
        <location evidence="1">Nucleoplasm</location>
    </subcellularLocation>
</comment>
<comment type="similarity">
    <text evidence="1">Belongs to the pescadillo family.</text>
</comment>
<organism>
    <name type="scientific">Malassezia globosa (strain ATCC MYA-4612 / CBS 7966)</name>
    <name type="common">Dandruff-associated fungus</name>
    <dbReference type="NCBI Taxonomy" id="425265"/>
    <lineage>
        <taxon>Eukaryota</taxon>
        <taxon>Fungi</taxon>
        <taxon>Dikarya</taxon>
        <taxon>Basidiomycota</taxon>
        <taxon>Ustilaginomycotina</taxon>
        <taxon>Malasseziomycetes</taxon>
        <taxon>Malasseziales</taxon>
        <taxon>Malasseziaceae</taxon>
        <taxon>Malassezia</taxon>
    </lineage>
</organism>
<name>PESC_MALGO</name>
<accession>A8Q1F0</accession>
<reference key="1">
    <citation type="journal article" date="2007" name="Proc. Natl. Acad. Sci. U.S.A.">
        <title>Dandruff-associated Malassezia genomes reveal convergent and divergent virulence traits shared with plant and human fungal pathogens.</title>
        <authorList>
            <person name="Xu J."/>
            <person name="Saunders C.W."/>
            <person name="Hu P."/>
            <person name="Grant R.A."/>
            <person name="Boekhout T."/>
            <person name="Kuramae E.E."/>
            <person name="Kronstad J.W."/>
            <person name="DeAngelis Y.M."/>
            <person name="Reeder N.L."/>
            <person name="Johnstone K.R."/>
            <person name="Leland M."/>
            <person name="Fieno A.M."/>
            <person name="Begley W.M."/>
            <person name="Sun Y."/>
            <person name="Lacey M.P."/>
            <person name="Chaudhary T."/>
            <person name="Keough T."/>
            <person name="Chu L."/>
            <person name="Sears R."/>
            <person name="Yuan B."/>
            <person name="Dawson T.L. Jr."/>
        </authorList>
    </citation>
    <scope>NUCLEOTIDE SEQUENCE [LARGE SCALE GENOMIC DNA]</scope>
    <source>
        <strain>ATCC MYA-4612 / CBS 7966</strain>
    </source>
</reference>
<gene>
    <name evidence="1" type="primary">NOP7</name>
    <name type="ORF">MGL_1778</name>
</gene>
<protein>
    <recommendedName>
        <fullName evidence="1">Pescadillo homolog</fullName>
    </recommendedName>
    <alternativeName>
        <fullName evidence="1">Nucleolar protein 7 homolog</fullName>
    </alternativeName>
</protein>
<sequence>MARIKKRGESGAAKNYITRNQSLKKLQITLAEFRRLCILKGIFPRQPRHVKRANKGSTAPTTFYYTKDIAYLQHEPVLQAFRDHKAFAKKVNRAIARREWHAAKNLDENRPKYRLDHIIKERYPTFVDSLRDLDDALSTLFLFANIPSQKSMAPEITAHCARLCAEWQLYVMRTHCLSKVFLSIKGIYFQAVVHGQEITWLVPYMFTQTIPTDVDFRVMMTFLELYQTLMGFVLFKLYTDENLVYPPKLDESLDNQGAGFGSLMLMAADADVLTGKHSLRPMDDAAAAEASSNAITRKDGKKLSTRDVKRQIAQLTRSEDKAEHEPEDDESMPALDATMQDQDSDEEADDEAGAADAFVAHASKTQGAGADQLTTLRDLQKQAGEDPLPMLFSRYVFYISREVPRTVFEFILRSFGASPSNVGWDPVAGAGSQVAVDDERVTHHILDRPVDGMSLDHAGHRVYIQPQWVVDCVNARQILPTDPYRPGQTLPPHLSPFVDDREVARKGGYVPEEAREKLGLEAEYVGGADEDEDEDEDEDEDEDKAGSGRGDDKNVAAREQDAVEKHDKTPARPALEALLADPTGAGLLEAAELEAEATGGEDALLDLRAKHAASLKSHKKKKRTSTTQSPQLSEEAEARDMAKTLLSNKQRKLYTRMGQATGKKKEEKMRLEAKKRALSKNKKP</sequence>